<evidence type="ECO:0000255" key="1"/>
<evidence type="ECO:0000256" key="2">
    <source>
        <dbReference type="SAM" id="MobiDB-lite"/>
    </source>
</evidence>
<feature type="chain" id="PRO_0000265097" description="Protein FAM204A">
    <location>
        <begin position="1"/>
        <end position="233"/>
    </location>
</feature>
<feature type="region of interest" description="Disordered" evidence="2">
    <location>
        <begin position="1"/>
        <end position="57"/>
    </location>
</feature>
<feature type="region of interest" description="Disordered" evidence="2">
    <location>
        <begin position="79"/>
        <end position="127"/>
    </location>
</feature>
<feature type="coiled-coil region" evidence="1">
    <location>
        <begin position="144"/>
        <end position="164"/>
    </location>
</feature>
<feature type="compositionally biased region" description="Acidic residues" evidence="2">
    <location>
        <begin position="13"/>
        <end position="24"/>
    </location>
</feature>
<feature type="compositionally biased region" description="Basic and acidic residues" evidence="2">
    <location>
        <begin position="34"/>
        <end position="46"/>
    </location>
</feature>
<feature type="compositionally biased region" description="Basic residues" evidence="2">
    <location>
        <begin position="98"/>
        <end position="109"/>
    </location>
</feature>
<keyword id="KW-0175">Coiled coil</keyword>
<keyword id="KW-1185">Reference proteome</keyword>
<protein>
    <recommendedName>
        <fullName>Protein FAM204A</fullName>
    </recommendedName>
</protein>
<sequence length="233" mass="26722">MWSGLLPPGLNESDVELNSDDDTTLESSELNLQEGKEDGTFEKTEMVDIPTDGPSTEAEANINAYEECPSGIPLNMWNKFQELHKKHSEQKTSASRSEKKKRKRSRKGKLKNEEESHSEQSSSETQWKELTQYFGVNERFDPPVKRKKVEKSGLEKRIDQAVEEWNIEKAEELSNQLATRELGVKIAKAIACHNFVKAKKEAENSQVARKKKKLAWGFEAKKRWETKSNMGYM</sequence>
<name>F204A_BOVIN</name>
<proteinExistence type="evidence at transcript level"/>
<accession>Q3ZCI6</accession>
<organism>
    <name type="scientific">Bos taurus</name>
    <name type="common">Bovine</name>
    <dbReference type="NCBI Taxonomy" id="9913"/>
    <lineage>
        <taxon>Eukaryota</taxon>
        <taxon>Metazoa</taxon>
        <taxon>Chordata</taxon>
        <taxon>Craniata</taxon>
        <taxon>Vertebrata</taxon>
        <taxon>Euteleostomi</taxon>
        <taxon>Mammalia</taxon>
        <taxon>Eutheria</taxon>
        <taxon>Laurasiatheria</taxon>
        <taxon>Artiodactyla</taxon>
        <taxon>Ruminantia</taxon>
        <taxon>Pecora</taxon>
        <taxon>Bovidae</taxon>
        <taxon>Bovinae</taxon>
        <taxon>Bos</taxon>
    </lineage>
</organism>
<dbReference type="EMBL" id="BC102175">
    <property type="protein sequence ID" value="AAI02176.1"/>
    <property type="molecule type" value="mRNA"/>
</dbReference>
<dbReference type="RefSeq" id="NP_001030224.1">
    <property type="nucleotide sequence ID" value="NM_001035052.2"/>
</dbReference>
<dbReference type="RefSeq" id="XP_024841322.1">
    <property type="nucleotide sequence ID" value="XM_024985554.2"/>
</dbReference>
<dbReference type="SMR" id="Q3ZCI6"/>
<dbReference type="FunCoup" id="Q3ZCI6">
    <property type="interactions" value="3286"/>
</dbReference>
<dbReference type="STRING" id="9913.ENSBTAP00000074595"/>
<dbReference type="PaxDb" id="9913-ENSBTAP00000006666"/>
<dbReference type="Ensembl" id="ENSBTAT00000070318.2">
    <property type="protein sequence ID" value="ENSBTAP00000074595.1"/>
    <property type="gene ID" value="ENSBTAG00000005057.7"/>
</dbReference>
<dbReference type="GeneID" id="507725"/>
<dbReference type="KEGG" id="bta:507725"/>
<dbReference type="CTD" id="63877"/>
<dbReference type="VEuPathDB" id="HostDB:ENSBTAG00000005057"/>
<dbReference type="VGNC" id="VGNC:28780">
    <property type="gene designation" value="FAM204A"/>
</dbReference>
<dbReference type="eggNOG" id="ENOG502RXHD">
    <property type="taxonomic scope" value="Eukaryota"/>
</dbReference>
<dbReference type="GeneTree" id="ENSGT00390000008978"/>
<dbReference type="HOGENOM" id="CLU_102986_0_0_1"/>
<dbReference type="InParanoid" id="Q3ZCI6"/>
<dbReference type="OMA" id="REKHWKE"/>
<dbReference type="OrthoDB" id="2418792at2759"/>
<dbReference type="TreeFam" id="TF328607"/>
<dbReference type="Proteomes" id="UP000009136">
    <property type="component" value="Chromosome 26"/>
</dbReference>
<dbReference type="Bgee" id="ENSBTAG00000005057">
    <property type="expression patterns" value="Expressed in caput epididymis and 105 other cell types or tissues"/>
</dbReference>
<dbReference type="InterPro" id="IPR037690">
    <property type="entry name" value="FAM204A"/>
</dbReference>
<dbReference type="PANTHER" id="PTHR14386">
    <property type="entry name" value="PROTEIN FAM204A"/>
    <property type="match status" value="1"/>
</dbReference>
<dbReference type="PANTHER" id="PTHR14386:SF2">
    <property type="entry name" value="PROTEIN FAM204A"/>
    <property type="match status" value="1"/>
</dbReference>
<gene>
    <name type="primary">FAM204A</name>
</gene>
<reference key="1">
    <citation type="submission" date="2005-08" db="EMBL/GenBank/DDBJ databases">
        <authorList>
            <consortium name="NIH - Mammalian Gene Collection (MGC) project"/>
        </authorList>
    </citation>
    <scope>NUCLEOTIDE SEQUENCE [LARGE SCALE MRNA]</scope>
    <source>
        <strain>Hereford</strain>
        <tissue>Mammary gland</tissue>
    </source>
</reference>